<sequence>MQSEMAIDTVATAEKSPLELLQQTKASVEAIIAKMLSIKQQGTPKSENRELLTQMFLNFINLRQANRSILIEEEKVRTETEIAKSPVDFTTLELHNLMYEKSHYLKANKASRDFKSRYPNIDLISEQDFFSDAPEAIKSQTLSNDSSHDLMLKRLNFELHQRKELCKLRVRLEQQKKSLLESNAERNKFLSSLPVHLKSLKKASLPVQSQLSLQNQKKLKYHNLAELLPPPLYVIYSQFMALKEAFEENIDVEVSGSLKDAQTYARQQAEQNSESLRLEVGVDEERQRKRLKKVGSDEGGVYQVHPLKVVLHVYDDEITDPKSHELVMLKFEYLLKLNVVCVGIEESEDGLEKNILCNLFPDDSGLEPPHQSAKLILGNDHVFDKSRTSRPYKWAQHLAGIETLPEMSPFFTDKDIQYSDTAKGYASASDHRNVQTVLQRIRSQKKTKLTLV</sequence>
<keyword id="KW-0507">mRNA processing</keyword>
<keyword id="KW-0508">mRNA splicing</keyword>
<keyword id="KW-0509">mRNA transport</keyword>
<keyword id="KW-0539">Nucleus</keyword>
<keyword id="KW-1185">Reference proteome</keyword>
<keyword id="KW-0694">RNA-binding</keyword>
<keyword id="KW-0813">Transport</keyword>
<gene>
    <name type="primary">THO5A</name>
    <name type="synonym">THO5</name>
    <name type="synonym">THOC5B</name>
    <name type="ordered locus">At1g45233</name>
    <name type="ORF">T2P3</name>
</gene>
<proteinExistence type="evidence at protein level"/>
<reference key="1">
    <citation type="journal article" date="2000" name="Nature">
        <title>Sequence and analysis of chromosome 1 of the plant Arabidopsis thaliana.</title>
        <authorList>
            <person name="Theologis A."/>
            <person name="Ecker J.R."/>
            <person name="Palm C.J."/>
            <person name="Federspiel N.A."/>
            <person name="Kaul S."/>
            <person name="White O."/>
            <person name="Alonso J."/>
            <person name="Altafi H."/>
            <person name="Araujo R."/>
            <person name="Bowman C.L."/>
            <person name="Brooks S.Y."/>
            <person name="Buehler E."/>
            <person name="Chan A."/>
            <person name="Chao Q."/>
            <person name="Chen H."/>
            <person name="Cheuk R.F."/>
            <person name="Chin C.W."/>
            <person name="Chung M.K."/>
            <person name="Conn L."/>
            <person name="Conway A.B."/>
            <person name="Conway A.R."/>
            <person name="Creasy T.H."/>
            <person name="Dewar K."/>
            <person name="Dunn P."/>
            <person name="Etgu P."/>
            <person name="Feldblyum T.V."/>
            <person name="Feng J.-D."/>
            <person name="Fong B."/>
            <person name="Fujii C.Y."/>
            <person name="Gill J.E."/>
            <person name="Goldsmith A.D."/>
            <person name="Haas B."/>
            <person name="Hansen N.F."/>
            <person name="Hughes B."/>
            <person name="Huizar L."/>
            <person name="Hunter J.L."/>
            <person name="Jenkins J."/>
            <person name="Johnson-Hopson C."/>
            <person name="Khan S."/>
            <person name="Khaykin E."/>
            <person name="Kim C.J."/>
            <person name="Koo H.L."/>
            <person name="Kremenetskaia I."/>
            <person name="Kurtz D.B."/>
            <person name="Kwan A."/>
            <person name="Lam B."/>
            <person name="Langin-Hooper S."/>
            <person name="Lee A."/>
            <person name="Lee J.M."/>
            <person name="Lenz C.A."/>
            <person name="Li J.H."/>
            <person name="Li Y.-P."/>
            <person name="Lin X."/>
            <person name="Liu S.X."/>
            <person name="Liu Z.A."/>
            <person name="Luros J.S."/>
            <person name="Maiti R."/>
            <person name="Marziali A."/>
            <person name="Militscher J."/>
            <person name="Miranda M."/>
            <person name="Nguyen M."/>
            <person name="Nierman W.C."/>
            <person name="Osborne B.I."/>
            <person name="Pai G."/>
            <person name="Peterson J."/>
            <person name="Pham P.K."/>
            <person name="Rizzo M."/>
            <person name="Rooney T."/>
            <person name="Rowley D."/>
            <person name="Sakano H."/>
            <person name="Salzberg S.L."/>
            <person name="Schwartz J.R."/>
            <person name="Shinn P."/>
            <person name="Southwick A.M."/>
            <person name="Sun H."/>
            <person name="Tallon L.J."/>
            <person name="Tambunga G."/>
            <person name="Toriumi M.J."/>
            <person name="Town C.D."/>
            <person name="Utterback T."/>
            <person name="Van Aken S."/>
            <person name="Vaysberg M."/>
            <person name="Vysotskaia V.S."/>
            <person name="Walker M."/>
            <person name="Wu D."/>
            <person name="Yu G."/>
            <person name="Fraser C.M."/>
            <person name="Venter J.C."/>
            <person name="Davis R.W."/>
        </authorList>
    </citation>
    <scope>NUCLEOTIDE SEQUENCE [LARGE SCALE GENOMIC DNA]</scope>
    <source>
        <strain>cv. Columbia</strain>
    </source>
</reference>
<reference key="2">
    <citation type="journal article" date="2017" name="Plant J.">
        <title>Araport11: a complete reannotation of the Arabidopsis thaliana reference genome.</title>
        <authorList>
            <person name="Cheng C.Y."/>
            <person name="Krishnakumar V."/>
            <person name="Chan A.P."/>
            <person name="Thibaud-Nissen F."/>
            <person name="Schobel S."/>
            <person name="Town C.D."/>
        </authorList>
    </citation>
    <scope>GENOME REANNOTATION</scope>
    <source>
        <strain>cv. Columbia</strain>
    </source>
</reference>
<reference key="3">
    <citation type="journal article" date="2010" name="Proc. Natl. Acad. Sci. U.S.A.">
        <title>Putative Arabidopsis THO/TREX mRNA export complex is involved in transgene and endogenous siRNA biosynthesis.</title>
        <authorList>
            <person name="Yelina N.E."/>
            <person name="Smith L.M."/>
            <person name="Jones A.M."/>
            <person name="Patel K."/>
            <person name="Kelly K.A."/>
            <person name="Baulcombe D.C."/>
        </authorList>
    </citation>
    <scope>IDENTIFICATION BY MASS SPECTROMETRY</scope>
    <scope>SUBUNIT</scope>
</reference>
<feature type="chain" id="PRO_0000425589" description="THO complex subunit 5A">
    <location>
        <begin position="1"/>
        <end position="452"/>
    </location>
</feature>
<evidence type="ECO:0000250" key="1"/>
<evidence type="ECO:0000269" key="2">
    <source>
    </source>
</evidence>
<evidence type="ECO:0000305" key="3"/>
<comment type="function">
    <text evidence="1">Acts as a component of the THO subcomplex of the TREX complex which is thought to couple mRNA transcription, processing and nuclear export.</text>
</comment>
<comment type="subunit">
    <text evidence="2">Component of the THO complex, which is composed of THO1, THO2, THO3, THO5, THO6 and THO7.</text>
</comment>
<comment type="subcellular location">
    <subcellularLocation>
        <location evidence="3">Nucleus</location>
    </subcellularLocation>
</comment>
<comment type="similarity">
    <text evidence="3">Belongs to the THOC5 family.</text>
</comment>
<dbReference type="EMBL" id="AC084820">
    <property type="status" value="NOT_ANNOTATED_CDS"/>
    <property type="molecule type" value="Genomic_DNA"/>
</dbReference>
<dbReference type="EMBL" id="CP002684">
    <property type="protein sequence ID" value="AEE32103.1"/>
    <property type="molecule type" value="Genomic_DNA"/>
</dbReference>
<dbReference type="RefSeq" id="NP_973979.2">
    <property type="nucleotide sequence ID" value="NM_202250.3"/>
</dbReference>
<dbReference type="SMR" id="F4HRC1"/>
<dbReference type="BioGRID" id="26318">
    <property type="interactions" value="4"/>
</dbReference>
<dbReference type="FunCoup" id="F4HRC1">
    <property type="interactions" value="3308"/>
</dbReference>
<dbReference type="STRING" id="3702.F4HRC1"/>
<dbReference type="iPTMnet" id="F4HRC1"/>
<dbReference type="PaxDb" id="3702-AT1G45233.2"/>
<dbReference type="ProteomicsDB" id="246459"/>
<dbReference type="EnsemblPlants" id="AT1G45233.2">
    <property type="protein sequence ID" value="AT1G45233.2"/>
    <property type="gene ID" value="AT1G45233"/>
</dbReference>
<dbReference type="GeneID" id="841093"/>
<dbReference type="Gramene" id="AT1G45233.2">
    <property type="protein sequence ID" value="AT1G45233.2"/>
    <property type="gene ID" value="AT1G45233"/>
</dbReference>
<dbReference type="KEGG" id="ath:AT1G45233"/>
<dbReference type="Araport" id="AT1G45233"/>
<dbReference type="TAIR" id="AT1G45233">
    <property type="gene designation" value="THO5"/>
</dbReference>
<dbReference type="eggNOG" id="KOG2216">
    <property type="taxonomic scope" value="Eukaryota"/>
</dbReference>
<dbReference type="HOGENOM" id="CLU_546786_0_0_1"/>
<dbReference type="InParanoid" id="F4HRC1"/>
<dbReference type="OMA" id="SKYPNID"/>
<dbReference type="OrthoDB" id="20582at2759"/>
<dbReference type="PhylomeDB" id="F4HRC1"/>
<dbReference type="PRO" id="PR:F4HRC1"/>
<dbReference type="Proteomes" id="UP000006548">
    <property type="component" value="Chromosome 1"/>
</dbReference>
<dbReference type="ExpressionAtlas" id="F4HRC1">
    <property type="expression patterns" value="baseline and differential"/>
</dbReference>
<dbReference type="GO" id="GO:0000347">
    <property type="term" value="C:THO complex"/>
    <property type="evidence" value="ECO:0000314"/>
    <property type="project" value="UniProtKB"/>
</dbReference>
<dbReference type="GO" id="GO:0003723">
    <property type="term" value="F:RNA binding"/>
    <property type="evidence" value="ECO:0007669"/>
    <property type="project" value="UniProtKB-KW"/>
</dbReference>
<dbReference type="GO" id="GO:0006397">
    <property type="term" value="P:mRNA processing"/>
    <property type="evidence" value="ECO:0007669"/>
    <property type="project" value="UniProtKB-KW"/>
</dbReference>
<dbReference type="GO" id="GO:0051028">
    <property type="term" value="P:mRNA transport"/>
    <property type="evidence" value="ECO:0007669"/>
    <property type="project" value="UniProtKB-KW"/>
</dbReference>
<dbReference type="GO" id="GO:0008380">
    <property type="term" value="P:RNA splicing"/>
    <property type="evidence" value="ECO:0007669"/>
    <property type="project" value="UniProtKB-KW"/>
</dbReference>
<dbReference type="InterPro" id="IPR019163">
    <property type="entry name" value="THO_Thoc5"/>
</dbReference>
<dbReference type="PANTHER" id="PTHR13375">
    <property type="entry name" value="FMS INTERACTING PROTEIN"/>
    <property type="match status" value="1"/>
</dbReference>
<dbReference type="PANTHER" id="PTHR13375:SF5">
    <property type="entry name" value="THO COMPLEX SUBUNIT 5A"/>
    <property type="match status" value="1"/>
</dbReference>
<dbReference type="Pfam" id="PF09766">
    <property type="entry name" value="FmiP_Thoc5"/>
    <property type="match status" value="1"/>
</dbReference>
<organism>
    <name type="scientific">Arabidopsis thaliana</name>
    <name type="common">Mouse-ear cress</name>
    <dbReference type="NCBI Taxonomy" id="3702"/>
    <lineage>
        <taxon>Eukaryota</taxon>
        <taxon>Viridiplantae</taxon>
        <taxon>Streptophyta</taxon>
        <taxon>Embryophyta</taxon>
        <taxon>Tracheophyta</taxon>
        <taxon>Spermatophyta</taxon>
        <taxon>Magnoliopsida</taxon>
        <taxon>eudicotyledons</taxon>
        <taxon>Gunneridae</taxon>
        <taxon>Pentapetalae</taxon>
        <taxon>rosids</taxon>
        <taxon>malvids</taxon>
        <taxon>Brassicales</taxon>
        <taxon>Brassicaceae</taxon>
        <taxon>Camelineae</taxon>
        <taxon>Arabidopsis</taxon>
    </lineage>
</organism>
<name>THO5A_ARATH</name>
<protein>
    <recommendedName>
        <fullName>THO complex subunit 5A</fullName>
    </recommendedName>
    <alternativeName>
        <fullName>THO complex subunit 5</fullName>
        <shortName>AtTHO5</shortName>
    </alternativeName>
</protein>
<accession>F4HRC1</accession>